<gene>
    <name evidence="1" type="primary">sfsA</name>
    <name type="ordered locus">TM1040_2468</name>
</gene>
<accession>Q1GDR6</accession>
<keyword id="KW-1185">Reference proteome</keyword>
<protein>
    <recommendedName>
        <fullName evidence="1">Sugar fermentation stimulation protein homolog</fullName>
    </recommendedName>
</protein>
<reference key="1">
    <citation type="submission" date="2006-05" db="EMBL/GenBank/DDBJ databases">
        <title>Complete sequence of chromosome of Silicibacter sp. TM1040.</title>
        <authorList>
            <consortium name="US DOE Joint Genome Institute"/>
            <person name="Copeland A."/>
            <person name="Lucas S."/>
            <person name="Lapidus A."/>
            <person name="Barry K."/>
            <person name="Detter J.C."/>
            <person name="Glavina del Rio T."/>
            <person name="Hammon N."/>
            <person name="Israni S."/>
            <person name="Dalin E."/>
            <person name="Tice H."/>
            <person name="Pitluck S."/>
            <person name="Brettin T."/>
            <person name="Bruce D."/>
            <person name="Han C."/>
            <person name="Tapia R."/>
            <person name="Goodwin L."/>
            <person name="Thompson L.S."/>
            <person name="Gilna P."/>
            <person name="Schmutz J."/>
            <person name="Larimer F."/>
            <person name="Land M."/>
            <person name="Hauser L."/>
            <person name="Kyrpides N."/>
            <person name="Kim E."/>
            <person name="Belas R."/>
            <person name="Moran M.A."/>
            <person name="Buchan A."/>
            <person name="Gonzalez J.M."/>
            <person name="Schell M.A."/>
            <person name="Sun F."/>
            <person name="Richardson P."/>
        </authorList>
    </citation>
    <scope>NUCLEOTIDE SEQUENCE [LARGE SCALE GENOMIC DNA]</scope>
    <source>
        <strain>TM1040</strain>
    </source>
</reference>
<evidence type="ECO:0000255" key="1">
    <source>
        <dbReference type="HAMAP-Rule" id="MF_00095"/>
    </source>
</evidence>
<evidence type="ECO:0000305" key="2"/>
<proteinExistence type="inferred from homology"/>
<comment type="similarity">
    <text evidence="1">Belongs to the SfsA family.</text>
</comment>
<comment type="sequence caution" evidence="2">
    <conflict type="erroneous initiation">
        <sequence resource="EMBL-CDS" id="ABF65200"/>
    </conflict>
</comment>
<sequence length="232" mass="25692">MRFPTPLIPATLIKRYKRFLADCRLEDGREITAHCANPGSMMGLAEPGMRVWLEPNDDPKKKLKYGWRLVEHTNGHFTGVDTSVPNRALKAALEAHEIAEFAAYSEVQAEVKYGQNSRIDFLLTDAKLPRCYVEVKSVTLSRQPGLAEFPDSVTARGTKHLRELAAMAEAGHRAVMLYLVQRTDCDRFALAADIDPAYAAEFETAHAKGVERLVIGTTITPEGVKIGDILPS</sequence>
<organism>
    <name type="scientific">Ruegeria sp. (strain TM1040)</name>
    <name type="common">Silicibacter sp.</name>
    <dbReference type="NCBI Taxonomy" id="292414"/>
    <lineage>
        <taxon>Bacteria</taxon>
        <taxon>Pseudomonadati</taxon>
        <taxon>Pseudomonadota</taxon>
        <taxon>Alphaproteobacteria</taxon>
        <taxon>Rhodobacterales</taxon>
        <taxon>Roseobacteraceae</taxon>
        <taxon>Ruegeria</taxon>
    </lineage>
</organism>
<feature type="chain" id="PRO_0000340152" description="Sugar fermentation stimulation protein homolog">
    <location>
        <begin position="1"/>
        <end position="232"/>
    </location>
</feature>
<name>SFSA_RUEST</name>
<dbReference type="EMBL" id="CP000377">
    <property type="protein sequence ID" value="ABF65200.1"/>
    <property type="status" value="ALT_INIT"/>
    <property type="molecule type" value="Genomic_DNA"/>
</dbReference>
<dbReference type="RefSeq" id="WP_044026898.1">
    <property type="nucleotide sequence ID" value="NC_008044.1"/>
</dbReference>
<dbReference type="SMR" id="Q1GDR6"/>
<dbReference type="STRING" id="292414.TM1040_2468"/>
<dbReference type="KEGG" id="sit:TM1040_2468"/>
<dbReference type="eggNOG" id="COG1489">
    <property type="taxonomic scope" value="Bacteria"/>
</dbReference>
<dbReference type="HOGENOM" id="CLU_052299_2_0_5"/>
<dbReference type="OrthoDB" id="9802365at2"/>
<dbReference type="Proteomes" id="UP000000636">
    <property type="component" value="Chromosome"/>
</dbReference>
<dbReference type="GO" id="GO:0003677">
    <property type="term" value="F:DNA binding"/>
    <property type="evidence" value="ECO:0007669"/>
    <property type="project" value="InterPro"/>
</dbReference>
<dbReference type="CDD" id="cd22359">
    <property type="entry name" value="SfsA-like_bacterial"/>
    <property type="match status" value="1"/>
</dbReference>
<dbReference type="Gene3D" id="2.40.50.580">
    <property type="match status" value="1"/>
</dbReference>
<dbReference type="Gene3D" id="3.40.1350.60">
    <property type="match status" value="1"/>
</dbReference>
<dbReference type="HAMAP" id="MF_00095">
    <property type="entry name" value="SfsA"/>
    <property type="match status" value="1"/>
</dbReference>
<dbReference type="InterPro" id="IPR005224">
    <property type="entry name" value="SfsA"/>
</dbReference>
<dbReference type="InterPro" id="IPR040452">
    <property type="entry name" value="SfsA_C"/>
</dbReference>
<dbReference type="InterPro" id="IPR041465">
    <property type="entry name" value="SfsA_N"/>
</dbReference>
<dbReference type="NCBIfam" id="TIGR00230">
    <property type="entry name" value="sfsA"/>
    <property type="match status" value="1"/>
</dbReference>
<dbReference type="PANTHER" id="PTHR30545">
    <property type="entry name" value="SUGAR FERMENTATION STIMULATION PROTEIN A"/>
    <property type="match status" value="1"/>
</dbReference>
<dbReference type="PANTHER" id="PTHR30545:SF2">
    <property type="entry name" value="SUGAR FERMENTATION STIMULATION PROTEIN A"/>
    <property type="match status" value="1"/>
</dbReference>
<dbReference type="Pfam" id="PF03749">
    <property type="entry name" value="SfsA"/>
    <property type="match status" value="1"/>
</dbReference>
<dbReference type="Pfam" id="PF17746">
    <property type="entry name" value="SfsA_N"/>
    <property type="match status" value="1"/>
</dbReference>